<name>RL5_PSYWF</name>
<dbReference type="EMBL" id="CP000713">
    <property type="protein sequence ID" value="ABQ93393.1"/>
    <property type="molecule type" value="Genomic_DNA"/>
</dbReference>
<dbReference type="SMR" id="A5WCK2"/>
<dbReference type="STRING" id="349106.PsycPRwf_0438"/>
<dbReference type="KEGG" id="prw:PsycPRwf_0438"/>
<dbReference type="eggNOG" id="COG0094">
    <property type="taxonomic scope" value="Bacteria"/>
</dbReference>
<dbReference type="HOGENOM" id="CLU_061015_2_1_6"/>
<dbReference type="GO" id="GO:1990904">
    <property type="term" value="C:ribonucleoprotein complex"/>
    <property type="evidence" value="ECO:0007669"/>
    <property type="project" value="UniProtKB-KW"/>
</dbReference>
<dbReference type="GO" id="GO:0005840">
    <property type="term" value="C:ribosome"/>
    <property type="evidence" value="ECO:0007669"/>
    <property type="project" value="UniProtKB-KW"/>
</dbReference>
<dbReference type="GO" id="GO:0019843">
    <property type="term" value="F:rRNA binding"/>
    <property type="evidence" value="ECO:0007669"/>
    <property type="project" value="UniProtKB-UniRule"/>
</dbReference>
<dbReference type="GO" id="GO:0003735">
    <property type="term" value="F:structural constituent of ribosome"/>
    <property type="evidence" value="ECO:0007669"/>
    <property type="project" value="InterPro"/>
</dbReference>
<dbReference type="GO" id="GO:0000049">
    <property type="term" value="F:tRNA binding"/>
    <property type="evidence" value="ECO:0007669"/>
    <property type="project" value="UniProtKB-UniRule"/>
</dbReference>
<dbReference type="GO" id="GO:0006412">
    <property type="term" value="P:translation"/>
    <property type="evidence" value="ECO:0007669"/>
    <property type="project" value="UniProtKB-UniRule"/>
</dbReference>
<dbReference type="FunFam" id="3.30.1440.10:FF:000001">
    <property type="entry name" value="50S ribosomal protein L5"/>
    <property type="match status" value="1"/>
</dbReference>
<dbReference type="Gene3D" id="3.30.1440.10">
    <property type="match status" value="1"/>
</dbReference>
<dbReference type="HAMAP" id="MF_01333_B">
    <property type="entry name" value="Ribosomal_uL5_B"/>
    <property type="match status" value="1"/>
</dbReference>
<dbReference type="InterPro" id="IPR002132">
    <property type="entry name" value="Ribosomal_uL5"/>
</dbReference>
<dbReference type="InterPro" id="IPR020930">
    <property type="entry name" value="Ribosomal_uL5_bac-type"/>
</dbReference>
<dbReference type="InterPro" id="IPR031309">
    <property type="entry name" value="Ribosomal_uL5_C"/>
</dbReference>
<dbReference type="InterPro" id="IPR020929">
    <property type="entry name" value="Ribosomal_uL5_CS"/>
</dbReference>
<dbReference type="InterPro" id="IPR022803">
    <property type="entry name" value="Ribosomal_uL5_dom_sf"/>
</dbReference>
<dbReference type="InterPro" id="IPR031310">
    <property type="entry name" value="Ribosomal_uL5_N"/>
</dbReference>
<dbReference type="NCBIfam" id="NF000585">
    <property type="entry name" value="PRK00010.1"/>
    <property type="match status" value="1"/>
</dbReference>
<dbReference type="PANTHER" id="PTHR11994">
    <property type="entry name" value="60S RIBOSOMAL PROTEIN L11-RELATED"/>
    <property type="match status" value="1"/>
</dbReference>
<dbReference type="Pfam" id="PF00281">
    <property type="entry name" value="Ribosomal_L5"/>
    <property type="match status" value="1"/>
</dbReference>
<dbReference type="Pfam" id="PF00673">
    <property type="entry name" value="Ribosomal_L5_C"/>
    <property type="match status" value="1"/>
</dbReference>
<dbReference type="PIRSF" id="PIRSF002161">
    <property type="entry name" value="Ribosomal_L5"/>
    <property type="match status" value="1"/>
</dbReference>
<dbReference type="SUPFAM" id="SSF55282">
    <property type="entry name" value="RL5-like"/>
    <property type="match status" value="1"/>
</dbReference>
<dbReference type="PROSITE" id="PS00358">
    <property type="entry name" value="RIBOSOMAL_L5"/>
    <property type="match status" value="1"/>
</dbReference>
<accession>A5WCK2</accession>
<organism>
    <name type="scientific">Psychrobacter sp. (strain PRwf-1)</name>
    <dbReference type="NCBI Taxonomy" id="349106"/>
    <lineage>
        <taxon>Bacteria</taxon>
        <taxon>Pseudomonadati</taxon>
        <taxon>Pseudomonadota</taxon>
        <taxon>Gammaproteobacteria</taxon>
        <taxon>Moraxellales</taxon>
        <taxon>Moraxellaceae</taxon>
        <taxon>Psychrobacter</taxon>
    </lineage>
</organism>
<comment type="function">
    <text evidence="1">This is one of the proteins that bind and probably mediate the attachment of the 5S RNA into the large ribosomal subunit, where it forms part of the central protuberance. In the 70S ribosome it contacts protein S13 of the 30S subunit (bridge B1b), connecting the 2 subunits; this bridge is implicated in subunit movement. Contacts the P site tRNA; the 5S rRNA and some of its associated proteins might help stabilize positioning of ribosome-bound tRNAs.</text>
</comment>
<comment type="subunit">
    <text evidence="1">Part of the 50S ribosomal subunit; part of the 5S rRNA/L5/L18/L25 subcomplex. Contacts the 5S rRNA and the P site tRNA. Forms a bridge to the 30S subunit in the 70S ribosome.</text>
</comment>
<comment type="similarity">
    <text evidence="1">Belongs to the universal ribosomal protein uL5 family.</text>
</comment>
<feature type="chain" id="PRO_1000073290" description="Large ribosomal subunit protein uL5">
    <location>
        <begin position="1"/>
        <end position="178"/>
    </location>
</feature>
<gene>
    <name evidence="1" type="primary">rplE</name>
    <name type="ordered locus">PsycPRwf_0438</name>
</gene>
<protein>
    <recommendedName>
        <fullName evidence="1">Large ribosomal subunit protein uL5</fullName>
    </recommendedName>
    <alternativeName>
        <fullName evidence="2">50S ribosomal protein L5</fullName>
    </alternativeName>
</protein>
<sequence>MARLKSLYNDQYKQQIKDELGLENVMQVPKITKITLNMGVGGASQDKKLLEGAVADMTAIAGQKPVITKARKSVAGFKIREEWPIGCKVTLRGEQMYEFLDRLIAIAIPRIRDFRGFSPKAFDGRGNYSLGIKEQIVFPEVDYDKIDRLRGLDITITTSAQDDEQGRALLKAFGFPFK</sequence>
<keyword id="KW-0687">Ribonucleoprotein</keyword>
<keyword id="KW-0689">Ribosomal protein</keyword>
<keyword id="KW-0694">RNA-binding</keyword>
<keyword id="KW-0699">rRNA-binding</keyword>
<keyword id="KW-0820">tRNA-binding</keyword>
<reference key="1">
    <citation type="submission" date="2007-05" db="EMBL/GenBank/DDBJ databases">
        <title>Complete sequence of chromosome of Psychrobacter sp. PRwf-1.</title>
        <authorList>
            <consortium name="US DOE Joint Genome Institute"/>
            <person name="Copeland A."/>
            <person name="Lucas S."/>
            <person name="Lapidus A."/>
            <person name="Barry K."/>
            <person name="Detter J.C."/>
            <person name="Glavina del Rio T."/>
            <person name="Hammon N."/>
            <person name="Israni S."/>
            <person name="Dalin E."/>
            <person name="Tice H."/>
            <person name="Pitluck S."/>
            <person name="Chain P."/>
            <person name="Malfatti S."/>
            <person name="Shin M."/>
            <person name="Vergez L."/>
            <person name="Schmutz J."/>
            <person name="Larimer F."/>
            <person name="Land M."/>
            <person name="Hauser L."/>
            <person name="Kyrpides N."/>
            <person name="Kim E."/>
            <person name="Tiedje J."/>
            <person name="Richardson P."/>
        </authorList>
    </citation>
    <scope>NUCLEOTIDE SEQUENCE [LARGE SCALE GENOMIC DNA]</scope>
    <source>
        <strain>PRwf-1</strain>
    </source>
</reference>
<evidence type="ECO:0000255" key="1">
    <source>
        <dbReference type="HAMAP-Rule" id="MF_01333"/>
    </source>
</evidence>
<evidence type="ECO:0000305" key="2"/>
<proteinExistence type="inferred from homology"/>